<organism>
    <name type="scientific">Syntrophotalea carbinolica (strain DSM 2380 / NBRC 103641 / GraBd1)</name>
    <name type="common">Pelobacter carbinolicus</name>
    <dbReference type="NCBI Taxonomy" id="338963"/>
    <lineage>
        <taxon>Bacteria</taxon>
        <taxon>Pseudomonadati</taxon>
        <taxon>Thermodesulfobacteriota</taxon>
        <taxon>Desulfuromonadia</taxon>
        <taxon>Desulfuromonadales</taxon>
        <taxon>Syntrophotaleaceae</taxon>
        <taxon>Syntrophotalea</taxon>
    </lineage>
</organism>
<sequence>MKLGILGGTFNPIHSAHLRIAEEVRERCRLDRILFIPAATPPHKELAGEIPFADRHAMVAAAIADNPDFAVTDLENRRAGKSYSVHTLELLRQEYPRDEFYFIIGMDSYRSLGIWKDFPRLFELTNLVVAARPGSPCDDPLRLLPVVIQEQFCYDENAHMLRHQSGHVVIFLEETFLDISSTHIRQLVAAGRSIRYLLPSGVEHYIYRHGLYRSQERS</sequence>
<name>NADD_SYNC1</name>
<dbReference type="EC" id="2.7.7.18" evidence="1"/>
<dbReference type="EMBL" id="CP000142">
    <property type="protein sequence ID" value="ABA89816.1"/>
    <property type="molecule type" value="Genomic_DNA"/>
</dbReference>
<dbReference type="RefSeq" id="WP_011342354.1">
    <property type="nucleotide sequence ID" value="NC_007498.2"/>
</dbReference>
<dbReference type="SMR" id="Q3A1E1"/>
<dbReference type="STRING" id="338963.Pcar_2578"/>
<dbReference type="KEGG" id="pca:Pcar_2578"/>
<dbReference type="eggNOG" id="COG1057">
    <property type="taxonomic scope" value="Bacteria"/>
</dbReference>
<dbReference type="HOGENOM" id="CLU_069765_3_1_7"/>
<dbReference type="OrthoDB" id="5295945at2"/>
<dbReference type="UniPathway" id="UPA00253">
    <property type="reaction ID" value="UER00332"/>
</dbReference>
<dbReference type="Proteomes" id="UP000002534">
    <property type="component" value="Chromosome"/>
</dbReference>
<dbReference type="GO" id="GO:0005524">
    <property type="term" value="F:ATP binding"/>
    <property type="evidence" value="ECO:0007669"/>
    <property type="project" value="UniProtKB-KW"/>
</dbReference>
<dbReference type="GO" id="GO:0004515">
    <property type="term" value="F:nicotinate-nucleotide adenylyltransferase activity"/>
    <property type="evidence" value="ECO:0007669"/>
    <property type="project" value="UniProtKB-UniRule"/>
</dbReference>
<dbReference type="GO" id="GO:0009435">
    <property type="term" value="P:NAD biosynthetic process"/>
    <property type="evidence" value="ECO:0007669"/>
    <property type="project" value="UniProtKB-UniRule"/>
</dbReference>
<dbReference type="CDD" id="cd02165">
    <property type="entry name" value="NMNAT"/>
    <property type="match status" value="1"/>
</dbReference>
<dbReference type="Gene3D" id="3.40.50.620">
    <property type="entry name" value="HUPs"/>
    <property type="match status" value="1"/>
</dbReference>
<dbReference type="HAMAP" id="MF_00244">
    <property type="entry name" value="NaMN_adenylyltr"/>
    <property type="match status" value="1"/>
</dbReference>
<dbReference type="InterPro" id="IPR004821">
    <property type="entry name" value="Cyt_trans-like"/>
</dbReference>
<dbReference type="InterPro" id="IPR005248">
    <property type="entry name" value="NadD/NMNAT"/>
</dbReference>
<dbReference type="InterPro" id="IPR014729">
    <property type="entry name" value="Rossmann-like_a/b/a_fold"/>
</dbReference>
<dbReference type="NCBIfam" id="TIGR00482">
    <property type="entry name" value="nicotinate (nicotinamide) nucleotide adenylyltransferase"/>
    <property type="match status" value="1"/>
</dbReference>
<dbReference type="NCBIfam" id="NF000840">
    <property type="entry name" value="PRK00071.1-3"/>
    <property type="match status" value="1"/>
</dbReference>
<dbReference type="PANTHER" id="PTHR39321">
    <property type="entry name" value="NICOTINATE-NUCLEOTIDE ADENYLYLTRANSFERASE-RELATED"/>
    <property type="match status" value="1"/>
</dbReference>
<dbReference type="PANTHER" id="PTHR39321:SF3">
    <property type="entry name" value="PHOSPHOPANTETHEINE ADENYLYLTRANSFERASE"/>
    <property type="match status" value="1"/>
</dbReference>
<dbReference type="Pfam" id="PF01467">
    <property type="entry name" value="CTP_transf_like"/>
    <property type="match status" value="1"/>
</dbReference>
<dbReference type="SUPFAM" id="SSF52374">
    <property type="entry name" value="Nucleotidylyl transferase"/>
    <property type="match status" value="1"/>
</dbReference>
<comment type="function">
    <text evidence="1">Catalyzes the reversible adenylation of nicotinate mononucleotide (NaMN) to nicotinic acid adenine dinucleotide (NaAD).</text>
</comment>
<comment type="catalytic activity">
    <reaction evidence="1">
        <text>nicotinate beta-D-ribonucleotide + ATP + H(+) = deamido-NAD(+) + diphosphate</text>
        <dbReference type="Rhea" id="RHEA:22860"/>
        <dbReference type="ChEBI" id="CHEBI:15378"/>
        <dbReference type="ChEBI" id="CHEBI:30616"/>
        <dbReference type="ChEBI" id="CHEBI:33019"/>
        <dbReference type="ChEBI" id="CHEBI:57502"/>
        <dbReference type="ChEBI" id="CHEBI:58437"/>
        <dbReference type="EC" id="2.7.7.18"/>
    </reaction>
</comment>
<comment type="pathway">
    <text evidence="1">Cofactor biosynthesis; NAD(+) biosynthesis; deamido-NAD(+) from nicotinate D-ribonucleotide: step 1/1.</text>
</comment>
<comment type="similarity">
    <text evidence="1">Belongs to the NadD family.</text>
</comment>
<feature type="chain" id="PRO_1000078387" description="Probable nicotinate-nucleotide adenylyltransferase">
    <location>
        <begin position="1"/>
        <end position="218"/>
    </location>
</feature>
<gene>
    <name evidence="1" type="primary">nadD</name>
    <name type="ordered locus">Pcar_2578</name>
</gene>
<accession>Q3A1E1</accession>
<proteinExistence type="inferred from homology"/>
<reference key="1">
    <citation type="submission" date="2005-10" db="EMBL/GenBank/DDBJ databases">
        <title>Complete sequence of Pelobacter carbinolicus DSM 2380.</title>
        <authorList>
            <person name="Copeland A."/>
            <person name="Lucas S."/>
            <person name="Lapidus A."/>
            <person name="Barry K."/>
            <person name="Detter J.C."/>
            <person name="Glavina T."/>
            <person name="Hammon N."/>
            <person name="Israni S."/>
            <person name="Pitluck S."/>
            <person name="Chertkov O."/>
            <person name="Schmutz J."/>
            <person name="Larimer F."/>
            <person name="Land M."/>
            <person name="Kyrpides N."/>
            <person name="Ivanova N."/>
            <person name="Richardson P."/>
        </authorList>
    </citation>
    <scope>NUCLEOTIDE SEQUENCE [LARGE SCALE GENOMIC DNA]</scope>
    <source>
        <strain>DSM 2380 / NBRC 103641 / GraBd1</strain>
    </source>
</reference>
<protein>
    <recommendedName>
        <fullName evidence="1">Probable nicotinate-nucleotide adenylyltransferase</fullName>
        <ecNumber evidence="1">2.7.7.18</ecNumber>
    </recommendedName>
    <alternativeName>
        <fullName evidence="1">Deamido-NAD(+) diphosphorylase</fullName>
    </alternativeName>
    <alternativeName>
        <fullName evidence="1">Deamido-NAD(+) pyrophosphorylase</fullName>
    </alternativeName>
    <alternativeName>
        <fullName evidence="1">Nicotinate mononucleotide adenylyltransferase</fullName>
        <shortName evidence="1">NaMN adenylyltransferase</shortName>
    </alternativeName>
</protein>
<evidence type="ECO:0000255" key="1">
    <source>
        <dbReference type="HAMAP-Rule" id="MF_00244"/>
    </source>
</evidence>
<keyword id="KW-0067">ATP-binding</keyword>
<keyword id="KW-0520">NAD</keyword>
<keyword id="KW-0547">Nucleotide-binding</keyword>
<keyword id="KW-0548">Nucleotidyltransferase</keyword>
<keyword id="KW-0662">Pyridine nucleotide biosynthesis</keyword>
<keyword id="KW-1185">Reference proteome</keyword>
<keyword id="KW-0808">Transferase</keyword>